<sequence>MKAFLGFLLLSYLAIILVHDNVNCIIFGIFDPCFYKISSKISNDYSSMQCSHPISYIGYEMFIQKWKDDNYWPLIIRHCCFYLVFSIAFASCVAFAIRRNLHLSTTMKLLGLLSILVWLAQPVLNQPFPT</sequence>
<reference key="1">
    <citation type="submission" date="2003-03" db="EMBL/GenBank/DDBJ databases">
        <title>African swine fever virus genomes.</title>
        <authorList>
            <person name="Kutish G.F."/>
            <person name="Rock D.L."/>
        </authorList>
    </citation>
    <scope>NUCLEOTIDE SEQUENCE [LARGE SCALE GENOMIC DNA]</scope>
</reference>
<comment type="function">
    <text evidence="1">Plays a role in virus cell tropism, and may be required for efficient virus replication in macrophages.</text>
</comment>
<comment type="subcellular location">
    <subcellularLocation>
        <location evidence="3">Host membrane</location>
        <topology evidence="3">Multi-pass membrane protein</topology>
    </subcellularLocation>
</comment>
<comment type="similarity">
    <text evidence="3">Belongs to the asfivirus MGF 110 family.</text>
</comment>
<evidence type="ECO:0000250" key="1"/>
<evidence type="ECO:0000255" key="2"/>
<evidence type="ECO:0000305" key="3"/>
<proteinExistence type="inferred from homology"/>
<name>1101B_ASFP4</name>
<gene>
    <name type="ordered locus">Pret-023</name>
</gene>
<dbReference type="EMBL" id="AY261363">
    <property type="status" value="NOT_ANNOTATED_CDS"/>
    <property type="molecule type" value="Genomic_DNA"/>
</dbReference>
<dbReference type="Proteomes" id="UP000000859">
    <property type="component" value="Segment"/>
</dbReference>
<dbReference type="GO" id="GO:0033644">
    <property type="term" value="C:host cell membrane"/>
    <property type="evidence" value="ECO:0007669"/>
    <property type="project" value="UniProtKB-SubCell"/>
</dbReference>
<dbReference type="GO" id="GO:0016020">
    <property type="term" value="C:membrane"/>
    <property type="evidence" value="ECO:0007669"/>
    <property type="project" value="UniProtKB-KW"/>
</dbReference>
<organismHost>
    <name type="scientific">Ornithodoros</name>
    <name type="common">relapsing fever ticks</name>
    <dbReference type="NCBI Taxonomy" id="6937"/>
</organismHost>
<organismHost>
    <name type="scientific">Phacochoerus aethiopicus</name>
    <name type="common">Warthog</name>
    <dbReference type="NCBI Taxonomy" id="85517"/>
</organismHost>
<organismHost>
    <name type="scientific">Phacochoerus africanus</name>
    <name type="common">Warthog</name>
    <dbReference type="NCBI Taxonomy" id="41426"/>
</organismHost>
<organismHost>
    <name type="scientific">Potamochoerus larvatus</name>
    <name type="common">Bushpig</name>
    <dbReference type="NCBI Taxonomy" id="273792"/>
</organismHost>
<organismHost>
    <name type="scientific">Sus scrofa</name>
    <name type="common">Pig</name>
    <dbReference type="NCBI Taxonomy" id="9823"/>
</organismHost>
<organism>
    <name type="scientific">African swine fever virus (isolate Tick/South Africa/Pretoriuskop Pr4/1996)</name>
    <name type="common">ASFV</name>
    <dbReference type="NCBI Taxonomy" id="561443"/>
    <lineage>
        <taxon>Viruses</taxon>
        <taxon>Varidnaviria</taxon>
        <taxon>Bamfordvirae</taxon>
        <taxon>Nucleocytoviricota</taxon>
        <taxon>Pokkesviricetes</taxon>
        <taxon>Asfuvirales</taxon>
        <taxon>Asfarviridae</taxon>
        <taxon>Asfivirus</taxon>
        <taxon>African swine fever virus</taxon>
    </lineage>
</organism>
<keyword id="KW-1043">Host membrane</keyword>
<keyword id="KW-0472">Membrane</keyword>
<keyword id="KW-0812">Transmembrane</keyword>
<keyword id="KW-1133">Transmembrane helix</keyword>
<feature type="chain" id="PRO_0000373219" description="Protein MGF 360-1L">
    <location>
        <begin position="1"/>
        <end position="130"/>
    </location>
</feature>
<feature type="transmembrane region" description="Helical" evidence="2">
    <location>
        <begin position="4"/>
        <end position="24"/>
    </location>
</feature>
<feature type="transmembrane region" description="Helical" evidence="2">
    <location>
        <begin position="75"/>
        <end position="95"/>
    </location>
</feature>
<feature type="transmembrane region" description="Helical" evidence="2">
    <location>
        <begin position="109"/>
        <end position="129"/>
    </location>
</feature>
<protein>
    <recommendedName>
        <fullName>Protein MGF 360-1L</fullName>
    </recommendedName>
</protein>
<accession>P0C9J7</accession>